<reference key="1">
    <citation type="journal article" date="2006" name="J. Bacteriol.">
        <title>The Methanosarcina barkeri genome: comparative analysis with Methanosarcina acetivorans and Methanosarcina mazei reveals extensive rearrangement within methanosarcinal genomes.</title>
        <authorList>
            <person name="Maeder D.L."/>
            <person name="Anderson I."/>
            <person name="Brettin T.S."/>
            <person name="Bruce D.C."/>
            <person name="Gilna P."/>
            <person name="Han C.S."/>
            <person name="Lapidus A."/>
            <person name="Metcalf W.W."/>
            <person name="Saunders E."/>
            <person name="Tapia R."/>
            <person name="Sowers K.R."/>
        </authorList>
    </citation>
    <scope>NUCLEOTIDE SEQUENCE [LARGE SCALE GENOMIC DNA]</scope>
    <source>
        <strain>Fusaro / DSM 804</strain>
    </source>
</reference>
<gene>
    <name evidence="1" type="primary">egsA</name>
    <name type="ordered locus">Mbar_A0291</name>
</gene>
<organism>
    <name type="scientific">Methanosarcina barkeri (strain Fusaro / DSM 804)</name>
    <dbReference type="NCBI Taxonomy" id="269797"/>
    <lineage>
        <taxon>Archaea</taxon>
        <taxon>Methanobacteriati</taxon>
        <taxon>Methanobacteriota</taxon>
        <taxon>Stenosarchaea group</taxon>
        <taxon>Methanomicrobia</taxon>
        <taxon>Methanosarcinales</taxon>
        <taxon>Methanosarcinaceae</taxon>
        <taxon>Methanosarcina</taxon>
    </lineage>
</organism>
<accession>Q46FR7</accession>
<evidence type="ECO:0000255" key="1">
    <source>
        <dbReference type="HAMAP-Rule" id="MF_00497"/>
    </source>
</evidence>
<keyword id="KW-0963">Cytoplasm</keyword>
<keyword id="KW-0444">Lipid biosynthesis</keyword>
<keyword id="KW-0443">Lipid metabolism</keyword>
<keyword id="KW-0479">Metal-binding</keyword>
<keyword id="KW-0520">NAD</keyword>
<keyword id="KW-0521">NADP</keyword>
<keyword id="KW-0560">Oxidoreductase</keyword>
<keyword id="KW-0594">Phospholipid biosynthesis</keyword>
<keyword id="KW-1208">Phospholipid metabolism</keyword>
<keyword id="KW-0862">Zinc</keyword>
<dbReference type="EC" id="1.1.1.261" evidence="1"/>
<dbReference type="EMBL" id="CP000099">
    <property type="protein sequence ID" value="AAZ69275.1"/>
    <property type="molecule type" value="Genomic_DNA"/>
</dbReference>
<dbReference type="SMR" id="Q46FR7"/>
<dbReference type="STRING" id="269797.Mbar_A0291"/>
<dbReference type="PaxDb" id="269797-Mbar_A0291"/>
<dbReference type="KEGG" id="mba:Mbar_A0291"/>
<dbReference type="eggNOG" id="arCOG00982">
    <property type="taxonomic scope" value="Archaea"/>
</dbReference>
<dbReference type="HOGENOM" id="CLU_038362_0_0_2"/>
<dbReference type="OrthoDB" id="8656at2157"/>
<dbReference type="UniPathway" id="UPA00940"/>
<dbReference type="GO" id="GO:0005737">
    <property type="term" value="C:cytoplasm"/>
    <property type="evidence" value="ECO:0007669"/>
    <property type="project" value="UniProtKB-SubCell"/>
</dbReference>
<dbReference type="GO" id="GO:0106357">
    <property type="term" value="F:glycerol-1-phosphate dehydrogenase (NAD+) activity"/>
    <property type="evidence" value="ECO:0007669"/>
    <property type="project" value="RHEA"/>
</dbReference>
<dbReference type="GO" id="GO:0106358">
    <property type="term" value="F:glycerol-1-phosphate dehydrogenase (NADP+) activity"/>
    <property type="evidence" value="ECO:0007669"/>
    <property type="project" value="RHEA"/>
</dbReference>
<dbReference type="GO" id="GO:0046872">
    <property type="term" value="F:metal ion binding"/>
    <property type="evidence" value="ECO:0007669"/>
    <property type="project" value="UniProtKB-KW"/>
</dbReference>
<dbReference type="GO" id="GO:0006650">
    <property type="term" value="P:glycerophospholipid metabolic process"/>
    <property type="evidence" value="ECO:0007669"/>
    <property type="project" value="UniProtKB-UniRule"/>
</dbReference>
<dbReference type="GO" id="GO:0008654">
    <property type="term" value="P:phospholipid biosynthetic process"/>
    <property type="evidence" value="ECO:0007669"/>
    <property type="project" value="UniProtKB-KW"/>
</dbReference>
<dbReference type="CDD" id="cd08173">
    <property type="entry name" value="Gro1PDH"/>
    <property type="match status" value="1"/>
</dbReference>
<dbReference type="Gene3D" id="3.40.50.1970">
    <property type="match status" value="1"/>
</dbReference>
<dbReference type="Gene3D" id="1.20.1090.10">
    <property type="entry name" value="Dehydroquinate synthase-like - alpha domain"/>
    <property type="match status" value="1"/>
</dbReference>
<dbReference type="HAMAP" id="MF_00497_A">
    <property type="entry name" value="G1P_dehydrogenase_A"/>
    <property type="match status" value="1"/>
</dbReference>
<dbReference type="InterPro" id="IPR023002">
    <property type="entry name" value="G1P_dehydrogenase_arc"/>
</dbReference>
<dbReference type="InterPro" id="IPR032837">
    <property type="entry name" value="G1PDH"/>
</dbReference>
<dbReference type="InterPro" id="IPR016205">
    <property type="entry name" value="Glycerol_DH"/>
</dbReference>
<dbReference type="NCBIfam" id="NF002022">
    <property type="entry name" value="PRK00843.1"/>
    <property type="match status" value="1"/>
</dbReference>
<dbReference type="PANTHER" id="PTHR43616">
    <property type="entry name" value="GLYCEROL DEHYDROGENASE"/>
    <property type="match status" value="1"/>
</dbReference>
<dbReference type="PANTHER" id="PTHR43616:SF5">
    <property type="entry name" value="GLYCEROL DEHYDROGENASE 1"/>
    <property type="match status" value="1"/>
</dbReference>
<dbReference type="Pfam" id="PF13685">
    <property type="entry name" value="Fe-ADH_2"/>
    <property type="match status" value="1"/>
</dbReference>
<dbReference type="PIRSF" id="PIRSF000112">
    <property type="entry name" value="Glycerol_dehydrogenase"/>
    <property type="match status" value="1"/>
</dbReference>
<dbReference type="SUPFAM" id="SSF56796">
    <property type="entry name" value="Dehydroquinate synthase-like"/>
    <property type="match status" value="1"/>
</dbReference>
<comment type="function">
    <text evidence="1">Catalyzes the NAD(P)H-dependent reduction of dihydroxyacetonephosphate (DHAP or glycerone phosphate) to glycerol 1-phosphate (G1P). The G1P thus generated is used as the glycerophosphate backbone of phospholipids in the cellular membranes of Archaea.</text>
</comment>
<comment type="catalytic activity">
    <reaction evidence="1">
        <text>sn-glycerol 1-phosphate + NAD(+) = dihydroxyacetone phosphate + NADH + H(+)</text>
        <dbReference type="Rhea" id="RHEA:21412"/>
        <dbReference type="ChEBI" id="CHEBI:15378"/>
        <dbReference type="ChEBI" id="CHEBI:57540"/>
        <dbReference type="ChEBI" id="CHEBI:57642"/>
        <dbReference type="ChEBI" id="CHEBI:57685"/>
        <dbReference type="ChEBI" id="CHEBI:57945"/>
        <dbReference type="EC" id="1.1.1.261"/>
    </reaction>
</comment>
<comment type="catalytic activity">
    <reaction evidence="1">
        <text>sn-glycerol 1-phosphate + NADP(+) = dihydroxyacetone phosphate + NADPH + H(+)</text>
        <dbReference type="Rhea" id="RHEA:21416"/>
        <dbReference type="ChEBI" id="CHEBI:15378"/>
        <dbReference type="ChEBI" id="CHEBI:57642"/>
        <dbReference type="ChEBI" id="CHEBI:57685"/>
        <dbReference type="ChEBI" id="CHEBI:57783"/>
        <dbReference type="ChEBI" id="CHEBI:58349"/>
        <dbReference type="EC" id="1.1.1.261"/>
    </reaction>
</comment>
<comment type="cofactor">
    <cofactor evidence="1">
        <name>Zn(2+)</name>
        <dbReference type="ChEBI" id="CHEBI:29105"/>
    </cofactor>
    <text evidence="1">Binds 1 zinc ion per subunit.</text>
</comment>
<comment type="pathway">
    <text evidence="1">Membrane lipid metabolism; glycerophospholipid metabolism.</text>
</comment>
<comment type="subcellular location">
    <subcellularLocation>
        <location evidence="1">Cytoplasm</location>
    </subcellularLocation>
</comment>
<comment type="similarity">
    <text evidence="1">Belongs to the glycerol-1-phosphate dehydrogenase family.</text>
</comment>
<feature type="chain" id="PRO_1000050602" description="Glycerol-1-phosphate dehydrogenase [NAD(P)+]">
    <location>
        <begin position="1"/>
        <end position="356"/>
    </location>
</feature>
<feature type="binding site" evidence="1">
    <location>
        <begin position="103"/>
        <end position="107"/>
    </location>
    <ligand>
        <name>NAD(+)</name>
        <dbReference type="ChEBI" id="CHEBI:57540"/>
    </ligand>
</feature>
<feature type="binding site" evidence="1">
    <location>
        <begin position="125"/>
        <end position="128"/>
    </location>
    <ligand>
        <name>NAD(+)</name>
        <dbReference type="ChEBI" id="CHEBI:57540"/>
    </ligand>
</feature>
<feature type="binding site" evidence="1">
    <location>
        <position position="130"/>
    </location>
    <ligand>
        <name>substrate</name>
    </ligand>
</feature>
<feature type="binding site" evidence="1">
    <location>
        <position position="134"/>
    </location>
    <ligand>
        <name>NAD(+)</name>
        <dbReference type="ChEBI" id="CHEBI:57540"/>
    </ligand>
</feature>
<feature type="binding site" evidence="1">
    <location>
        <position position="177"/>
    </location>
    <ligand>
        <name>substrate</name>
    </ligand>
</feature>
<feature type="binding site" evidence="1">
    <location>
        <position position="177"/>
    </location>
    <ligand>
        <name>Zn(2+)</name>
        <dbReference type="ChEBI" id="CHEBI:29105"/>
        <note>catalytic</note>
    </ligand>
</feature>
<feature type="binding site" evidence="1">
    <location>
        <position position="257"/>
    </location>
    <ligand>
        <name>Zn(2+)</name>
        <dbReference type="ChEBI" id="CHEBI:29105"/>
        <note>catalytic</note>
    </ligand>
</feature>
<feature type="binding site" evidence="1">
    <location>
        <position position="261"/>
    </location>
    <ligand>
        <name>substrate</name>
    </ligand>
</feature>
<feature type="binding site" evidence="1">
    <location>
        <position position="273"/>
    </location>
    <ligand>
        <name>Zn(2+)</name>
        <dbReference type="ChEBI" id="CHEBI:29105"/>
        <note>catalytic</note>
    </ligand>
</feature>
<sequence>MKLTINKNSAKWMQLPRDVLVGHGVLEEIGDVCRDLKMKGNALIVTGSTTNNIAGKRVSNLLESAGCSAEMVLTCKATKEEVEKVMEKALEVETNFLIGVGSGRSIDLAKLASTRLELPFISVPTAASHDGIASSRASIVDNGRSTSAQAQAPIAVIADTEIISAAPFRFLAAGCGDIISNYTAVLDWELASRLRNEYFGAYAAALSRMAARVIIECADSIKPEHETSARLVVKALVSNGVAMSIAGSSRPASGSEHMFSHALDKIAPKPALHGEQCGVGTIMMMYLHGGNWQEIREALKKIGAPVTAEELGIEDRYIIEALLHAHSIRPERYTILGSGLNPSAAEKVARITKVIN</sequence>
<proteinExistence type="inferred from homology"/>
<protein>
    <recommendedName>
        <fullName evidence="1">Glycerol-1-phosphate dehydrogenase [NAD(P)+]</fullName>
        <shortName evidence="1">G1P dehydrogenase</shortName>
        <shortName evidence="1">G1PDH</shortName>
        <ecNumber evidence="1">1.1.1.261</ecNumber>
    </recommendedName>
    <alternativeName>
        <fullName evidence="1">Enantiomeric glycerophosphate synthase</fullName>
    </alternativeName>
    <alternativeName>
        <fullName evidence="1">sn-glycerol-1-phosphate dehydrogenase</fullName>
    </alternativeName>
</protein>
<name>G1PDH_METBF</name>